<accession>Q5HV71</accession>
<proteinExistence type="inferred from homology"/>
<reference key="1">
    <citation type="journal article" date="2005" name="PLoS Biol.">
        <title>Major structural differences and novel potential virulence mechanisms from the genomes of multiple Campylobacter species.</title>
        <authorList>
            <person name="Fouts D.E."/>
            <person name="Mongodin E.F."/>
            <person name="Mandrell R.E."/>
            <person name="Miller W.G."/>
            <person name="Rasko D.A."/>
            <person name="Ravel J."/>
            <person name="Brinkac L.M."/>
            <person name="DeBoy R.T."/>
            <person name="Parker C.T."/>
            <person name="Daugherty S.C."/>
            <person name="Dodson R.J."/>
            <person name="Durkin A.S."/>
            <person name="Madupu R."/>
            <person name="Sullivan S.A."/>
            <person name="Shetty J.U."/>
            <person name="Ayodeji M.A."/>
            <person name="Shvartsbeyn A."/>
            <person name="Schatz M.C."/>
            <person name="Badger J.H."/>
            <person name="Fraser C.M."/>
            <person name="Nelson K.E."/>
        </authorList>
    </citation>
    <scope>NUCLEOTIDE SEQUENCE [LARGE SCALE GENOMIC DNA]</scope>
    <source>
        <strain>RM1221</strain>
    </source>
</reference>
<evidence type="ECO:0000255" key="1">
    <source>
        <dbReference type="HAMAP-Rule" id="MF_00385"/>
    </source>
</evidence>
<evidence type="ECO:0000305" key="2"/>
<sequence>MTVIRLTRMGRTKRPFYRIVVTDSRKRRDGGWIESIGYYNPMVEPEVIKVDAERLAYWKSVGAKLSDKVASITSK</sequence>
<keyword id="KW-0687">Ribonucleoprotein</keyword>
<keyword id="KW-0689">Ribosomal protein</keyword>
<name>RS16_CAMJR</name>
<feature type="chain" id="PRO_0000243790" description="Small ribosomal subunit protein bS16">
    <location>
        <begin position="1"/>
        <end position="75"/>
    </location>
</feature>
<comment type="similarity">
    <text evidence="1">Belongs to the bacterial ribosomal protein bS16 family.</text>
</comment>
<protein>
    <recommendedName>
        <fullName evidence="1">Small ribosomal subunit protein bS16</fullName>
    </recommendedName>
    <alternativeName>
        <fullName evidence="2">30S ribosomal protein S16</fullName>
    </alternativeName>
</protein>
<organism>
    <name type="scientific">Campylobacter jejuni (strain RM1221)</name>
    <dbReference type="NCBI Taxonomy" id="195099"/>
    <lineage>
        <taxon>Bacteria</taxon>
        <taxon>Pseudomonadati</taxon>
        <taxon>Campylobacterota</taxon>
        <taxon>Epsilonproteobacteria</taxon>
        <taxon>Campylobacterales</taxon>
        <taxon>Campylobacteraceae</taxon>
        <taxon>Campylobacter</taxon>
    </lineage>
</organism>
<dbReference type="EMBL" id="CP000025">
    <property type="protein sequence ID" value="AAW34595.1"/>
    <property type="molecule type" value="Genomic_DNA"/>
</dbReference>
<dbReference type="RefSeq" id="WP_002852274.1">
    <property type="nucleotide sequence ID" value="NC_003912.7"/>
</dbReference>
<dbReference type="SMR" id="Q5HV71"/>
<dbReference type="KEGG" id="cjr:CJE0810"/>
<dbReference type="HOGENOM" id="CLU_100590_5_1_7"/>
<dbReference type="GO" id="GO:0005737">
    <property type="term" value="C:cytoplasm"/>
    <property type="evidence" value="ECO:0007669"/>
    <property type="project" value="UniProtKB-ARBA"/>
</dbReference>
<dbReference type="GO" id="GO:0015935">
    <property type="term" value="C:small ribosomal subunit"/>
    <property type="evidence" value="ECO:0007669"/>
    <property type="project" value="TreeGrafter"/>
</dbReference>
<dbReference type="GO" id="GO:0003735">
    <property type="term" value="F:structural constituent of ribosome"/>
    <property type="evidence" value="ECO:0007669"/>
    <property type="project" value="InterPro"/>
</dbReference>
<dbReference type="GO" id="GO:0006412">
    <property type="term" value="P:translation"/>
    <property type="evidence" value="ECO:0007669"/>
    <property type="project" value="UniProtKB-UniRule"/>
</dbReference>
<dbReference type="FunFam" id="3.30.1320.10:FF:000005">
    <property type="entry name" value="30S ribosomal protein S16"/>
    <property type="match status" value="1"/>
</dbReference>
<dbReference type="Gene3D" id="3.30.1320.10">
    <property type="match status" value="1"/>
</dbReference>
<dbReference type="HAMAP" id="MF_00385">
    <property type="entry name" value="Ribosomal_bS16"/>
    <property type="match status" value="1"/>
</dbReference>
<dbReference type="InterPro" id="IPR000307">
    <property type="entry name" value="Ribosomal_bS16"/>
</dbReference>
<dbReference type="InterPro" id="IPR020592">
    <property type="entry name" value="Ribosomal_bS16_CS"/>
</dbReference>
<dbReference type="InterPro" id="IPR023803">
    <property type="entry name" value="Ribosomal_bS16_dom_sf"/>
</dbReference>
<dbReference type="NCBIfam" id="TIGR00002">
    <property type="entry name" value="S16"/>
    <property type="match status" value="1"/>
</dbReference>
<dbReference type="PANTHER" id="PTHR12919">
    <property type="entry name" value="30S RIBOSOMAL PROTEIN S16"/>
    <property type="match status" value="1"/>
</dbReference>
<dbReference type="PANTHER" id="PTHR12919:SF20">
    <property type="entry name" value="SMALL RIBOSOMAL SUBUNIT PROTEIN BS16M"/>
    <property type="match status" value="1"/>
</dbReference>
<dbReference type="Pfam" id="PF00886">
    <property type="entry name" value="Ribosomal_S16"/>
    <property type="match status" value="1"/>
</dbReference>
<dbReference type="SUPFAM" id="SSF54565">
    <property type="entry name" value="Ribosomal protein S16"/>
    <property type="match status" value="1"/>
</dbReference>
<dbReference type="PROSITE" id="PS00732">
    <property type="entry name" value="RIBOSOMAL_S16"/>
    <property type="match status" value="1"/>
</dbReference>
<gene>
    <name evidence="1" type="primary">rpsP</name>
    <name type="ordered locus">CJE0810</name>
</gene>